<proteinExistence type="evidence at protein level"/>
<evidence type="ECO:0000250" key="1"/>
<evidence type="ECO:0000256" key="2">
    <source>
        <dbReference type="SAM" id="MobiDB-lite"/>
    </source>
</evidence>
<evidence type="ECO:0000269" key="3">
    <source>
    </source>
</evidence>
<evidence type="ECO:0000269" key="4">
    <source>
    </source>
</evidence>
<evidence type="ECO:0000305" key="5"/>
<evidence type="ECO:0007744" key="6">
    <source>
    </source>
</evidence>
<keyword id="KW-0067">ATP-binding</keyword>
<keyword id="KW-0131">Cell cycle</keyword>
<keyword id="KW-0227">DNA damage</keyword>
<keyword id="KW-0418">Kinase</keyword>
<keyword id="KW-0547">Nucleotide-binding</keyword>
<keyword id="KW-0597">Phosphoprotein</keyword>
<keyword id="KW-1185">Reference proteome</keyword>
<keyword id="KW-0723">Serine/threonine-protein kinase</keyword>
<keyword id="KW-0808">Transferase</keyword>
<name>ALK1_YEAST</name>
<organism>
    <name type="scientific">Saccharomyces cerevisiae (strain ATCC 204508 / S288c)</name>
    <name type="common">Baker's yeast</name>
    <dbReference type="NCBI Taxonomy" id="559292"/>
    <lineage>
        <taxon>Eukaryota</taxon>
        <taxon>Fungi</taxon>
        <taxon>Dikarya</taxon>
        <taxon>Ascomycota</taxon>
        <taxon>Saccharomycotina</taxon>
        <taxon>Saccharomycetes</taxon>
        <taxon>Saccharomycetales</taxon>
        <taxon>Saccharomycetaceae</taxon>
        <taxon>Saccharomyces</taxon>
    </lineage>
</organism>
<sequence>MLLHFDIVIQLLSSHTLKSHQVEPPMDFETSFEEFVEDKRFIALEVSDNDDDCDTDLTADTADELESSAILKMRESDASLNVTTGNNTSRKTTSNSKKRWSLLSNHSAVSSSKSKKRWSVLSSSFTSESHKDRESRNVLQQKRKSLQSYSSLDTVASNSSISASSSLKRSSTGLSLRQLFTKIGINDDISQPGIGIPQGKENLPPTMGKKNSSIASTSSENRLRTPLKPLVNHSKRPTSQPQQQQPLYNASLSSRRSSISSTVSSSSSSKWRFWKRNKNQTPALLQPDHHSLKTFPAVNRRDSMTPVEPRNMVKHKTSFSDFHKTIFSSNTYSESSDTISSMEITLKNKASSSSLSLNVLKKRNSQSSLKHKSSHASLQKFKRNKGKSSMIAPSTATNSSNDDSCSYSSKNSTLSHRISLPVPDQVSRDKIQNKLRYSTSLLSLNSKSSLPMNKNDHDETLLRQILLNCDIKRILNPAKGDVLPLINDVNHLSSIQLTSNVWQIGEVICKKVSLGTIDDITWDRKFLSLQELEKLKIMQQKFDGIPQLLKSFVVKEANGGLYLYLLFKDHGTPISLISLKNWKQILKIFWSCAGIIHGLEKNLKFEHRNLTLDNILIDGNGNITIIDFKCSRLQTPQDDVLYLRLDHPLFFLNGKDKSKINEYQYQFEFEIYQSMRILLNMDASAFEPMTNLYWLYYLSRVLLKFGDRKLGKNDANRDKMARVINHLEMNLAVHKRGGQLFKRLETEDIKNTGDLLKLYK</sequence>
<feature type="chain" id="PRO_0000064557" description="Serine/threonine-protein kinase Haspin homolog ALK1">
    <location>
        <begin position="1"/>
        <end position="760"/>
    </location>
</feature>
<feature type="domain" description="Protein kinase">
    <location>
        <begin position="468"/>
        <end position="760"/>
    </location>
</feature>
<feature type="region of interest" description="Disordered" evidence="2">
    <location>
        <begin position="76"/>
        <end position="100"/>
    </location>
</feature>
<feature type="region of interest" description="Disordered" evidence="2">
    <location>
        <begin position="123"/>
        <end position="153"/>
    </location>
</feature>
<feature type="region of interest" description="Disordered" evidence="2">
    <location>
        <begin position="187"/>
        <end position="264"/>
    </location>
</feature>
<feature type="region of interest" description="Disordered" evidence="2">
    <location>
        <begin position="362"/>
        <end position="408"/>
    </location>
</feature>
<feature type="short sequence motif" description="KEN box">
    <location>
        <begin position="200"/>
        <end position="202"/>
    </location>
</feature>
<feature type="short sequence motif" description="D box">
    <location>
        <begin position="224"/>
        <end position="232"/>
    </location>
</feature>
<feature type="compositionally biased region" description="Polar residues" evidence="2">
    <location>
        <begin position="78"/>
        <end position="95"/>
    </location>
</feature>
<feature type="compositionally biased region" description="Polar residues" evidence="2">
    <location>
        <begin position="209"/>
        <end position="220"/>
    </location>
</feature>
<feature type="compositionally biased region" description="Polar residues" evidence="2">
    <location>
        <begin position="237"/>
        <end position="250"/>
    </location>
</feature>
<feature type="compositionally biased region" description="Low complexity" evidence="2">
    <location>
        <begin position="251"/>
        <end position="264"/>
    </location>
</feature>
<feature type="compositionally biased region" description="Basic residues" evidence="2">
    <location>
        <begin position="362"/>
        <end position="386"/>
    </location>
</feature>
<feature type="compositionally biased region" description="Low complexity" evidence="2">
    <location>
        <begin position="398"/>
        <end position="408"/>
    </location>
</feature>
<feature type="binding site" evidence="1">
    <location>
        <begin position="474"/>
        <end position="482"/>
    </location>
    <ligand>
        <name>ATP</name>
        <dbReference type="ChEBI" id="CHEBI:30616"/>
    </ligand>
</feature>
<feature type="binding site" evidence="1">
    <location>
        <position position="510"/>
    </location>
    <ligand>
        <name>ATP</name>
        <dbReference type="ChEBI" id="CHEBI:30616"/>
    </ligand>
</feature>
<feature type="modified residue" description="Phosphoserine" evidence="6">
    <location>
        <position position="76"/>
    </location>
</feature>
<feature type="modified residue" description="Phosphoserine" evidence="6">
    <location>
        <position position="79"/>
    </location>
</feature>
<feature type="mutagenesis site" description="Strongly reduces kinase activity." evidence="4">
    <original>EHRNL</original>
    <variation>AAAAA</variation>
    <location>
        <begin position="606"/>
        <end position="610"/>
    </location>
</feature>
<feature type="sequence conflict" description="In Ref. 1; CAA61012." evidence="5" ref="1">
    <original>LYK</original>
    <variation>AL</variation>
    <location>
        <begin position="758"/>
        <end position="760"/>
    </location>
</feature>
<accession>P43633</accession>
<accession>D6VUB6</accession>
<reference key="1">
    <citation type="submission" date="1995-05" db="EMBL/GenBank/DDBJ databases">
        <title>A novel DNA damage-response gene from Saccharomyces cerevisiae with homology to protein kinase.</title>
        <authorList>
            <person name="Moen C."/>
            <person name="Lindstedt B.A."/>
            <person name="Berdal K.G."/>
            <person name="Rognes T."/>
            <person name="Seeberg E.C."/>
        </authorList>
    </citation>
    <scope>NUCLEOTIDE SEQUENCE [GENOMIC DNA]</scope>
</reference>
<reference key="2">
    <citation type="journal article" date="1997" name="Nature">
        <title>The nucleotide sequence of Saccharomyces cerevisiae chromosome VII.</title>
        <authorList>
            <person name="Tettelin H."/>
            <person name="Agostoni-Carbone M.L."/>
            <person name="Albermann K."/>
            <person name="Albers M."/>
            <person name="Arroyo J."/>
            <person name="Backes U."/>
            <person name="Barreiros T."/>
            <person name="Bertani I."/>
            <person name="Bjourson A.J."/>
            <person name="Brueckner M."/>
            <person name="Bruschi C.V."/>
            <person name="Carignani G."/>
            <person name="Castagnoli L."/>
            <person name="Cerdan E."/>
            <person name="Clemente M.L."/>
            <person name="Coblenz A."/>
            <person name="Coglievina M."/>
            <person name="Coissac E."/>
            <person name="Defoor E."/>
            <person name="Del Bino S."/>
            <person name="Delius H."/>
            <person name="Delneri D."/>
            <person name="de Wergifosse P."/>
            <person name="Dujon B."/>
            <person name="Durand P."/>
            <person name="Entian K.-D."/>
            <person name="Eraso P."/>
            <person name="Escribano V."/>
            <person name="Fabiani L."/>
            <person name="Fartmann B."/>
            <person name="Feroli F."/>
            <person name="Feuermann M."/>
            <person name="Frontali L."/>
            <person name="Garcia-Gonzalez M."/>
            <person name="Garcia-Saez M.I."/>
            <person name="Goffeau A."/>
            <person name="Guerreiro P."/>
            <person name="Hani J."/>
            <person name="Hansen M."/>
            <person name="Hebling U."/>
            <person name="Hernandez K."/>
            <person name="Heumann K."/>
            <person name="Hilger F."/>
            <person name="Hofmann B."/>
            <person name="Indge K.J."/>
            <person name="James C.M."/>
            <person name="Klima R."/>
            <person name="Koetter P."/>
            <person name="Kramer B."/>
            <person name="Kramer W."/>
            <person name="Lauquin G."/>
            <person name="Leuther H."/>
            <person name="Louis E.J."/>
            <person name="Maillier E."/>
            <person name="Marconi A."/>
            <person name="Martegani E."/>
            <person name="Mazon M.J."/>
            <person name="Mazzoni C."/>
            <person name="McReynolds A.D.K."/>
            <person name="Melchioretto P."/>
            <person name="Mewes H.-W."/>
            <person name="Minenkova O."/>
            <person name="Mueller-Auer S."/>
            <person name="Nawrocki A."/>
            <person name="Netter P."/>
            <person name="Neu R."/>
            <person name="Nombela C."/>
            <person name="Oliver S.G."/>
            <person name="Panzeri L."/>
            <person name="Paoluzi S."/>
            <person name="Plevani P."/>
            <person name="Portetelle D."/>
            <person name="Portillo F."/>
            <person name="Potier S."/>
            <person name="Purnelle B."/>
            <person name="Rieger M."/>
            <person name="Riles L."/>
            <person name="Rinaldi T."/>
            <person name="Robben J."/>
            <person name="Rodrigues-Pousada C."/>
            <person name="Rodriguez-Belmonte E."/>
            <person name="Rodriguez-Torres A.M."/>
            <person name="Rose M."/>
            <person name="Ruzzi M."/>
            <person name="Saliola M."/>
            <person name="Sanchez-Perez M."/>
            <person name="Schaefer B."/>
            <person name="Schaefer M."/>
            <person name="Scharfe M."/>
            <person name="Schmidheini T."/>
            <person name="Schreer A."/>
            <person name="Skala J."/>
            <person name="Souciet J.-L."/>
            <person name="Steensma H.Y."/>
            <person name="Talla E."/>
            <person name="Thierry A."/>
            <person name="Vandenbol M."/>
            <person name="van der Aart Q.J.M."/>
            <person name="Van Dyck L."/>
            <person name="Vanoni M."/>
            <person name="Verhasselt P."/>
            <person name="Voet M."/>
            <person name="Volckaert G."/>
            <person name="Wambutt R."/>
            <person name="Watson M.D."/>
            <person name="Weber N."/>
            <person name="Wedler E."/>
            <person name="Wedler H."/>
            <person name="Wipfli P."/>
            <person name="Wolf K."/>
            <person name="Wright L.F."/>
            <person name="Zaccaria P."/>
            <person name="Zimmermann M."/>
            <person name="Zollner A."/>
            <person name="Kleine K."/>
        </authorList>
    </citation>
    <scope>NUCLEOTIDE SEQUENCE [LARGE SCALE GENOMIC DNA]</scope>
    <source>
        <strain>ATCC 204508 / S288c</strain>
    </source>
</reference>
<reference key="3">
    <citation type="journal article" date="2014" name="G3 (Bethesda)">
        <title>The reference genome sequence of Saccharomyces cerevisiae: Then and now.</title>
        <authorList>
            <person name="Engel S.R."/>
            <person name="Dietrich F.S."/>
            <person name="Fisk D.G."/>
            <person name="Binkley G."/>
            <person name="Balakrishnan R."/>
            <person name="Costanzo M.C."/>
            <person name="Dwight S.S."/>
            <person name="Hitz B.C."/>
            <person name="Karra K."/>
            <person name="Nash R.S."/>
            <person name="Weng S."/>
            <person name="Wong E.D."/>
            <person name="Lloyd P."/>
            <person name="Skrzypek M.S."/>
            <person name="Miyasato S.R."/>
            <person name="Simison M."/>
            <person name="Cherry J.M."/>
        </authorList>
    </citation>
    <scope>GENOME REANNOTATION</scope>
    <source>
        <strain>ATCC 204508 / S288c</strain>
    </source>
</reference>
<reference key="4">
    <citation type="journal article" date="2003" name="Nature">
        <title>Global analysis of protein expression in yeast.</title>
        <authorList>
            <person name="Ghaemmaghami S."/>
            <person name="Huh W.-K."/>
            <person name="Bower K."/>
            <person name="Howson R.W."/>
            <person name="Belle A."/>
            <person name="Dephoure N."/>
            <person name="O'Shea E.K."/>
            <person name="Weissman J.S."/>
        </authorList>
    </citation>
    <scope>LEVEL OF PROTEIN EXPRESSION [LARGE SCALE ANALYSIS]</scope>
</reference>
<reference key="5">
    <citation type="journal article" date="2006" name="Cell Cycle">
        <title>Alk1 and Alk2 are two new cell cycle-regulated haspin-like proteins in budding yeast.</title>
        <authorList>
            <person name="Nespoli A."/>
            <person name="Vercillo R."/>
            <person name="di Nola L."/>
            <person name="Diani L."/>
            <person name="Giannattasio M."/>
            <person name="Plevani P."/>
            <person name="Muzi-Falconi M."/>
        </authorList>
    </citation>
    <scope>FUNCTION</scope>
    <scope>INDUCTION</scope>
    <scope>DOMAINS</scope>
    <scope>MUTAGENESIS OF 606-E--L-610</scope>
</reference>
<reference key="6">
    <citation type="journal article" date="2007" name="Proc. Natl. Acad. Sci. U.S.A.">
        <title>Analysis of phosphorylation sites on proteins from Saccharomyces cerevisiae by electron transfer dissociation (ETD) mass spectrometry.</title>
        <authorList>
            <person name="Chi A."/>
            <person name="Huttenhower C."/>
            <person name="Geer L.Y."/>
            <person name="Coon J.J."/>
            <person name="Syka J.E.P."/>
            <person name="Bai D.L."/>
            <person name="Shabanowitz J."/>
            <person name="Burke D.J."/>
            <person name="Troyanskaya O.G."/>
            <person name="Hunt D.F."/>
        </authorList>
    </citation>
    <scope>IDENTIFICATION BY MASS SPECTROMETRY [LARGE SCALE ANALYSIS]</scope>
</reference>
<reference key="7">
    <citation type="journal article" date="2008" name="Mol. Cell. Proteomics">
        <title>A multidimensional chromatography technology for in-depth phosphoproteome analysis.</title>
        <authorList>
            <person name="Albuquerque C.P."/>
            <person name="Smolka M.B."/>
            <person name="Payne S.H."/>
            <person name="Bafna V."/>
            <person name="Eng J."/>
            <person name="Zhou H."/>
        </authorList>
    </citation>
    <scope>IDENTIFICATION BY MASS SPECTROMETRY [LARGE SCALE ANALYSIS]</scope>
</reference>
<reference key="8">
    <citation type="journal article" date="2009" name="Science">
        <title>Global analysis of Cdk1 substrate phosphorylation sites provides insights into evolution.</title>
        <authorList>
            <person name="Holt L.J."/>
            <person name="Tuch B.B."/>
            <person name="Villen J."/>
            <person name="Johnson A.D."/>
            <person name="Gygi S.P."/>
            <person name="Morgan D.O."/>
        </authorList>
    </citation>
    <scope>PHOSPHORYLATION [LARGE SCALE ANALYSIS] AT SER-76 AND SER-79</scope>
    <scope>IDENTIFICATION BY MASS SPECTROMETRY [LARGE SCALE ANALYSIS]</scope>
</reference>
<comment type="function">
    <text evidence="4">Serine/threonine haspin-like protein kinase involved in cell cycle regulation.</text>
</comment>
<comment type="catalytic activity">
    <reaction>
        <text>L-seryl-[protein] + ATP = O-phospho-L-seryl-[protein] + ADP + H(+)</text>
        <dbReference type="Rhea" id="RHEA:17989"/>
        <dbReference type="Rhea" id="RHEA-COMP:9863"/>
        <dbReference type="Rhea" id="RHEA-COMP:11604"/>
        <dbReference type="ChEBI" id="CHEBI:15378"/>
        <dbReference type="ChEBI" id="CHEBI:29999"/>
        <dbReference type="ChEBI" id="CHEBI:30616"/>
        <dbReference type="ChEBI" id="CHEBI:83421"/>
        <dbReference type="ChEBI" id="CHEBI:456216"/>
        <dbReference type="EC" id="2.7.11.1"/>
    </reaction>
</comment>
<comment type="catalytic activity">
    <reaction>
        <text>L-threonyl-[protein] + ATP = O-phospho-L-threonyl-[protein] + ADP + H(+)</text>
        <dbReference type="Rhea" id="RHEA:46608"/>
        <dbReference type="Rhea" id="RHEA-COMP:11060"/>
        <dbReference type="Rhea" id="RHEA-COMP:11605"/>
        <dbReference type="ChEBI" id="CHEBI:15378"/>
        <dbReference type="ChEBI" id="CHEBI:30013"/>
        <dbReference type="ChEBI" id="CHEBI:30616"/>
        <dbReference type="ChEBI" id="CHEBI:61977"/>
        <dbReference type="ChEBI" id="CHEBI:456216"/>
        <dbReference type="EC" id="2.7.11.1"/>
    </reaction>
</comment>
<comment type="induction">
    <text evidence="4">Absent in G1-arrested cells and accumulates in G2-M.</text>
</comment>
<comment type="domain">
    <text evidence="4">The KEN and D (destructive) boxes are required for the cell cycle-controlled ALK1 degradation by the anaphase promoting complex (APC) pathway.</text>
</comment>
<comment type="domain">
    <text evidence="4">The protein kinase domain is predicted to be catalytically inactive. However, weak kinase activity was experimentally demonstrated.</text>
</comment>
<comment type="PTM">
    <text>Periodically phosphorylated during the cell cycle with a phosphorylation peak during mitosis and hyperphosphorylated after DNA damage.</text>
</comment>
<comment type="miscellaneous">
    <text evidence="3">Present with 2190 molecules/cell in log phase SD medium.</text>
</comment>
<comment type="similarity">
    <text evidence="5">Belongs to the protein kinase superfamily. Ser/Thr protein kinase family. Haspin subfamily.</text>
</comment>
<gene>
    <name type="primary">ALK1</name>
    <name type="ordered locus">YGL021W</name>
    <name type="ORF">G3686</name>
</gene>
<protein>
    <recommendedName>
        <fullName>Serine/threonine-protein kinase Haspin homolog ALK1</fullName>
        <ecNumber>2.7.11.1</ecNumber>
    </recommendedName>
    <alternativeName>
        <fullName>DNA damage-responsive protein ALK1</fullName>
    </alternativeName>
</protein>
<dbReference type="EC" id="2.7.11.1"/>
<dbReference type="EMBL" id="X87672">
    <property type="protein sequence ID" value="CAA61012.1"/>
    <property type="molecule type" value="Genomic_DNA"/>
</dbReference>
<dbReference type="EMBL" id="Z72543">
    <property type="protein sequence ID" value="CAA96721.1"/>
    <property type="molecule type" value="Genomic_DNA"/>
</dbReference>
<dbReference type="EMBL" id="BK006941">
    <property type="protein sequence ID" value="DAA08077.1"/>
    <property type="molecule type" value="Genomic_DNA"/>
</dbReference>
<dbReference type="PIR" id="S64023">
    <property type="entry name" value="S64023"/>
</dbReference>
<dbReference type="RefSeq" id="NP_011494.1">
    <property type="nucleotide sequence ID" value="NM_001180886.1"/>
</dbReference>
<dbReference type="BioGRID" id="33225">
    <property type="interactions" value="66"/>
</dbReference>
<dbReference type="DIP" id="DIP-4816N"/>
<dbReference type="FunCoup" id="P43633">
    <property type="interactions" value="41"/>
</dbReference>
<dbReference type="IntAct" id="P43633">
    <property type="interactions" value="9"/>
</dbReference>
<dbReference type="MINT" id="P43633"/>
<dbReference type="STRING" id="4932.YGL021W"/>
<dbReference type="iPTMnet" id="P43633"/>
<dbReference type="PaxDb" id="4932-YGL021W"/>
<dbReference type="PeptideAtlas" id="P43633"/>
<dbReference type="EnsemblFungi" id="YGL021W_mRNA">
    <property type="protein sequence ID" value="YGL021W"/>
    <property type="gene ID" value="YGL021W"/>
</dbReference>
<dbReference type="GeneID" id="852863"/>
<dbReference type="KEGG" id="sce:YGL021W"/>
<dbReference type="AGR" id="SGD:S000002989"/>
<dbReference type="SGD" id="S000002989">
    <property type="gene designation" value="ALK1"/>
</dbReference>
<dbReference type="VEuPathDB" id="FungiDB:YGL021W"/>
<dbReference type="eggNOG" id="KOG2464">
    <property type="taxonomic scope" value="Eukaryota"/>
</dbReference>
<dbReference type="GeneTree" id="ENSGT00940000167518"/>
<dbReference type="HOGENOM" id="CLU_022568_0_0_1"/>
<dbReference type="InParanoid" id="P43633"/>
<dbReference type="OMA" id="TKFQFEH"/>
<dbReference type="OrthoDB" id="5327538at2759"/>
<dbReference type="BioCyc" id="YEAST:G3O-30541-MONOMER"/>
<dbReference type="Reactome" id="R-SCE-9020702">
    <property type="pathway name" value="Interleukin-1 signaling"/>
</dbReference>
<dbReference type="BioGRID-ORCS" id="852863">
    <property type="hits" value="1 hit in 13 CRISPR screens"/>
</dbReference>
<dbReference type="PRO" id="PR:P43633"/>
<dbReference type="Proteomes" id="UP000002311">
    <property type="component" value="Chromosome VII"/>
</dbReference>
<dbReference type="RNAct" id="P43633">
    <property type="molecule type" value="protein"/>
</dbReference>
<dbReference type="GO" id="GO:0005737">
    <property type="term" value="C:cytoplasm"/>
    <property type="evidence" value="ECO:0000318"/>
    <property type="project" value="GO_Central"/>
</dbReference>
<dbReference type="GO" id="GO:0005634">
    <property type="term" value="C:nucleus"/>
    <property type="evidence" value="ECO:0000318"/>
    <property type="project" value="GO_Central"/>
</dbReference>
<dbReference type="GO" id="GO:0005524">
    <property type="term" value="F:ATP binding"/>
    <property type="evidence" value="ECO:0007669"/>
    <property type="project" value="UniProtKB-KW"/>
</dbReference>
<dbReference type="GO" id="GO:0072354">
    <property type="term" value="F:histone H3T3 kinase activity"/>
    <property type="evidence" value="ECO:0000318"/>
    <property type="project" value="GO_Central"/>
</dbReference>
<dbReference type="GO" id="GO:0004672">
    <property type="term" value="F:protein kinase activity"/>
    <property type="evidence" value="ECO:0000314"/>
    <property type="project" value="SGD"/>
</dbReference>
<dbReference type="GO" id="GO:0106310">
    <property type="term" value="F:protein serine kinase activity"/>
    <property type="evidence" value="ECO:0007669"/>
    <property type="project" value="RHEA"/>
</dbReference>
<dbReference type="GO" id="GO:0006974">
    <property type="term" value="P:DNA damage response"/>
    <property type="evidence" value="ECO:0007669"/>
    <property type="project" value="UniProtKB-KW"/>
</dbReference>
<dbReference type="GO" id="GO:0035556">
    <property type="term" value="P:intracellular signal transduction"/>
    <property type="evidence" value="ECO:0000318"/>
    <property type="project" value="GO_Central"/>
</dbReference>
<dbReference type="GO" id="GO:0000278">
    <property type="term" value="P:mitotic cell cycle"/>
    <property type="evidence" value="ECO:0000318"/>
    <property type="project" value="GO_Central"/>
</dbReference>
<dbReference type="GO" id="GO:0044879">
    <property type="term" value="P:mitotic morphogenesis checkpoint signaling"/>
    <property type="evidence" value="ECO:0000315"/>
    <property type="project" value="SGD"/>
</dbReference>
<dbReference type="Gene3D" id="1.10.510.10">
    <property type="entry name" value="Transferase(Phosphotransferase) domain 1"/>
    <property type="match status" value="2"/>
</dbReference>
<dbReference type="InterPro" id="IPR024604">
    <property type="entry name" value="GSG2_C"/>
</dbReference>
<dbReference type="InterPro" id="IPR011009">
    <property type="entry name" value="Kinase-like_dom_sf"/>
</dbReference>
<dbReference type="PANTHER" id="PTHR24419">
    <property type="entry name" value="INTERLEUKIN-1 RECEPTOR-ASSOCIATED KINASE"/>
    <property type="match status" value="1"/>
</dbReference>
<dbReference type="PANTHER" id="PTHR24419:SF18">
    <property type="entry name" value="SERINE_THREONINE-PROTEIN KINASE HASPIN"/>
    <property type="match status" value="1"/>
</dbReference>
<dbReference type="Pfam" id="PF12330">
    <property type="entry name" value="Haspin_kinase"/>
    <property type="match status" value="1"/>
</dbReference>
<dbReference type="SMART" id="SM01331">
    <property type="entry name" value="DUF3635"/>
    <property type="match status" value="1"/>
</dbReference>
<dbReference type="SUPFAM" id="SSF56112">
    <property type="entry name" value="Protein kinase-like (PK-like)"/>
    <property type="match status" value="1"/>
</dbReference>